<sequence length="394" mass="42747">MSNWGDYENEIYGQGLVGVAPTLPMSYADWEAHAQQALPPGVLSYVAGGSGDEHTQRANVEAFKHWGLMPRMLMAATERDLSVELWGKTWAAPMFFAPIGVIALCAQDGHGDAASAQASARTGVPYITSTLAVSSLEDIRKHAGDTPAYFQLYYPEDRDLAESFIRRAEEAGYDGLVITLDTWIFGWRPRDLTISNFPFLRGLCLTNYVTDPVFQKKFKAHSGVEAEGLRDNPRLAADFWHGLFGHSVTWEDIDWVRSITKMPVILKGIQHPDDARRAVDSGVDGIYCSNHGGRQANGGLPALDCLPEVVKASGDTPVLFDSGIRTGADVVKALAMGASAVGIGRPYAWGAALGGSKGIEHVARSLLAEADLIMAVDGYRNLKELTIDALRPTR</sequence>
<protein>
    <recommendedName>
        <fullName evidence="4">L-lactate 2-monooxygenase</fullName>
        <shortName evidence="5">LMO</shortName>
        <ecNumber evidence="3">1.13.12.4</ecNumber>
    </recommendedName>
    <alternativeName>
        <fullName evidence="5">Lactate monooxygenase</fullName>
    </alternativeName>
</protein>
<accession>P21795</accession>
<name>LMO_MYCSM</name>
<evidence type="ECO:0000255" key="1">
    <source>
        <dbReference type="PROSITE-ProRule" id="PRU00683"/>
    </source>
</evidence>
<evidence type="ECO:0000269" key="2">
    <source>
    </source>
</evidence>
<evidence type="ECO:0000269" key="3">
    <source>
    </source>
</evidence>
<evidence type="ECO:0000303" key="4">
    <source>
    </source>
</evidence>
<evidence type="ECO:0000303" key="5">
    <source>
    </source>
</evidence>
<evidence type="ECO:0000305" key="6"/>
<evidence type="ECO:0000305" key="7">
    <source>
    </source>
</evidence>
<evidence type="ECO:0007744" key="8">
    <source>
        <dbReference type="PDB" id="6DVH"/>
    </source>
</evidence>
<evidence type="ECO:0007744" key="9">
    <source>
        <dbReference type="PDB" id="6DVI"/>
    </source>
</evidence>
<evidence type="ECO:0007829" key="10">
    <source>
        <dbReference type="PDB" id="6DVH"/>
    </source>
</evidence>
<reference key="1">
    <citation type="journal article" date="1990" name="J. Biol. Chem.">
        <title>L-lactate 2-monooxygenase from Mycobacterium smegmatis. Cloning, nucleotide sequence, and primary structure homology within an enzyme family.</title>
        <authorList>
            <person name="Giegel D.A."/>
            <person name="Williams C.H. Jr."/>
            <person name="Massey V."/>
        </authorList>
    </citation>
    <scope>NUCLEOTIDE SEQUENCE [GENOMIC DNA]</scope>
    <source>
        <strain>ATCC 14468 / DSM 43277 / NCIB 9953 / NCTC 10265 / W-113</strain>
    </source>
</reference>
<reference key="2">
    <citation type="journal article" date="1987" name="J. Biol. Chem.">
        <title>L-lactate-2-monooxygenase. Sequence of peptides containing residues modified by 1-fluoro-2,4-dinitrobenzene.</title>
        <authorList>
            <person name="Giegel D.A."/>
            <person name="Massey V."/>
            <person name="Williams C.H. Jr."/>
        </authorList>
    </citation>
    <scope>PARTIAL PROTEIN SEQUENCE</scope>
</reference>
<reference key="3">
    <citation type="journal article" date="1972" name="J. Biol. Chem.">
        <title>Mechanism of action of the flavoenzyme lactate oxidase.</title>
        <authorList>
            <person name="Lockridge O."/>
            <person name="Massey V."/>
            <person name="Sullivan P.A."/>
        </authorList>
    </citation>
    <scope>FUNCTION</scope>
    <scope>CATALYTIC ACTIVITY</scope>
    <scope>BIOPHYSICOCHEMICAL PROPERTIES</scope>
</reference>
<reference evidence="8 9" key="4">
    <citation type="journal article" date="2019" name="Protein Sci.">
        <title>Structure and role for active site lid of lactate monooxygenase from Mycobacterium smegmatis.</title>
        <authorList>
            <person name="Kean K.M."/>
            <person name="Karplus P.A."/>
        </authorList>
    </citation>
    <scope>X-RAY CRYSTALLOGRAPHY (1.70 ANGSTROMS) OF WILD-TYPE AND MUTANT ALA-204 IN COMPLEX WITH FMN</scope>
    <scope>COFACTOR</scope>
    <scope>SUBUNIT</scope>
</reference>
<feature type="initiator methionine" description="Removed">
    <location>
        <position position="1"/>
    </location>
</feature>
<feature type="chain" id="PRO_0000206326" description="L-lactate 2-monooxygenase">
    <location>
        <begin position="2"/>
        <end position="394"/>
    </location>
</feature>
<feature type="domain" description="FMN hydroxy acid dehydrogenase" evidence="1">
    <location>
        <begin position="19"/>
        <end position="394"/>
    </location>
</feature>
<feature type="active site" description="Proton acceptor" evidence="1">
    <location>
        <position position="291"/>
    </location>
</feature>
<feature type="binding site" evidence="1">
    <location>
        <position position="45"/>
    </location>
    <ligand>
        <name>a 2-oxocarboxylate</name>
        <dbReference type="ChEBI" id="CHEBI:35179"/>
    </ligand>
</feature>
<feature type="binding site" evidence="2 9">
    <location>
        <begin position="98"/>
        <end position="100"/>
    </location>
    <ligand>
        <name>FMN</name>
        <dbReference type="ChEBI" id="CHEBI:58210"/>
    </ligand>
</feature>
<feature type="binding site" evidence="2 9">
    <location>
        <position position="129"/>
    </location>
    <ligand>
        <name>FMN</name>
        <dbReference type="ChEBI" id="CHEBI:58210"/>
    </ligand>
</feature>
<feature type="binding site" evidence="2 9">
    <location>
        <position position="151"/>
    </location>
    <ligand>
        <name>FMN</name>
        <dbReference type="ChEBI" id="CHEBI:58210"/>
    </ligand>
</feature>
<feature type="binding site" evidence="1">
    <location>
        <position position="153"/>
    </location>
    <ligand>
        <name>a 2-oxocarboxylate</name>
        <dbReference type="ChEBI" id="CHEBI:35179"/>
    </ligand>
</feature>
<feature type="binding site" evidence="2 9">
    <location>
        <position position="179"/>
    </location>
    <ligand>
        <name>FMN</name>
        <dbReference type="ChEBI" id="CHEBI:58210"/>
    </ligand>
</feature>
<feature type="binding site" evidence="1">
    <location>
        <position position="188"/>
    </location>
    <ligand>
        <name>a 2-oxocarboxylate</name>
        <dbReference type="ChEBI" id="CHEBI:35179"/>
    </ligand>
</feature>
<feature type="binding site" evidence="2 9">
    <location>
        <position position="267"/>
    </location>
    <ligand>
        <name>FMN</name>
        <dbReference type="ChEBI" id="CHEBI:58210"/>
    </ligand>
</feature>
<feature type="binding site" evidence="1">
    <location>
        <position position="294"/>
    </location>
    <ligand>
        <name>a 2-oxocarboxylate</name>
        <dbReference type="ChEBI" id="CHEBI:35179"/>
    </ligand>
</feature>
<feature type="binding site" evidence="2 9">
    <location>
        <begin position="321"/>
        <end position="325"/>
    </location>
    <ligand>
        <name>FMN</name>
        <dbReference type="ChEBI" id="CHEBI:58210"/>
    </ligand>
</feature>
<feature type="binding site" evidence="2 9">
    <location>
        <position position="345"/>
    </location>
    <ligand>
        <name>FMN</name>
        <dbReference type="ChEBI" id="CHEBI:58210"/>
    </ligand>
</feature>
<feature type="helix" evidence="10">
    <location>
        <begin position="4"/>
        <end position="6"/>
    </location>
</feature>
<feature type="helix" evidence="10">
    <location>
        <begin position="7"/>
        <end position="15"/>
    </location>
</feature>
<feature type="turn" evidence="10">
    <location>
        <begin position="16"/>
        <end position="18"/>
    </location>
</feature>
<feature type="helix" evidence="10">
    <location>
        <begin position="27"/>
        <end position="37"/>
    </location>
</feature>
<feature type="helix" evidence="10">
    <location>
        <begin position="40"/>
        <end position="47"/>
    </location>
</feature>
<feature type="helix" evidence="10">
    <location>
        <begin position="54"/>
        <end position="61"/>
    </location>
</feature>
<feature type="helix" evidence="10">
    <location>
        <begin position="62"/>
        <end position="65"/>
    </location>
</feature>
<feature type="strand" evidence="10">
    <location>
        <begin position="66"/>
        <end position="68"/>
    </location>
</feature>
<feature type="strand" evidence="10">
    <location>
        <begin position="83"/>
        <end position="85"/>
    </location>
</feature>
<feature type="strand" evidence="10">
    <location>
        <begin position="88"/>
        <end position="96"/>
    </location>
</feature>
<feature type="helix" evidence="10">
    <location>
        <begin position="102"/>
        <end position="105"/>
    </location>
</feature>
<feature type="helix" evidence="10">
    <location>
        <begin position="111"/>
        <end position="122"/>
    </location>
</feature>
<feature type="strand" evidence="10">
    <location>
        <begin position="126"/>
        <end position="128"/>
    </location>
</feature>
<feature type="strand" evidence="10">
    <location>
        <begin position="130"/>
        <end position="134"/>
    </location>
</feature>
<feature type="helix" evidence="10">
    <location>
        <begin position="136"/>
        <end position="142"/>
    </location>
</feature>
<feature type="turn" evidence="10">
    <location>
        <begin position="143"/>
        <end position="145"/>
    </location>
</feature>
<feature type="strand" evidence="10">
    <location>
        <begin position="148"/>
        <end position="152"/>
    </location>
</feature>
<feature type="helix" evidence="10">
    <location>
        <begin position="158"/>
        <end position="171"/>
    </location>
</feature>
<feature type="strand" evidence="10">
    <location>
        <begin position="176"/>
        <end position="179"/>
    </location>
</feature>
<feature type="helix" evidence="10">
    <location>
        <begin position="189"/>
        <end position="193"/>
    </location>
</feature>
<feature type="helix" evidence="10">
    <location>
        <begin position="198"/>
        <end position="201"/>
    </location>
</feature>
<feature type="helix" evidence="10">
    <location>
        <begin position="206"/>
        <end position="209"/>
    </location>
</feature>
<feature type="helix" evidence="10">
    <location>
        <begin position="212"/>
        <end position="222"/>
    </location>
</feature>
<feature type="helix" evidence="10">
    <location>
        <begin position="226"/>
        <end position="231"/>
    </location>
</feature>
<feature type="helix" evidence="10">
    <location>
        <begin position="233"/>
        <end position="236"/>
    </location>
</feature>
<feature type="helix" evidence="10">
    <location>
        <begin position="237"/>
        <end position="243"/>
    </location>
</feature>
<feature type="helix" evidence="10">
    <location>
        <begin position="250"/>
        <end position="258"/>
    </location>
</feature>
<feature type="strand" evidence="10">
    <location>
        <begin position="264"/>
        <end position="269"/>
    </location>
</feature>
<feature type="helix" evidence="10">
    <location>
        <begin position="272"/>
        <end position="280"/>
    </location>
</feature>
<feature type="strand" evidence="10">
    <location>
        <begin position="284"/>
        <end position="288"/>
    </location>
</feature>
<feature type="helix" evidence="10">
    <location>
        <begin position="291"/>
        <end position="293"/>
    </location>
</feature>
<feature type="helix" evidence="10">
    <location>
        <begin position="302"/>
        <end position="313"/>
    </location>
</feature>
<feature type="strand" evidence="10">
    <location>
        <begin position="318"/>
        <end position="320"/>
    </location>
</feature>
<feature type="helix" evidence="10">
    <location>
        <begin position="327"/>
        <end position="335"/>
    </location>
</feature>
<feature type="strand" evidence="10">
    <location>
        <begin position="339"/>
        <end position="343"/>
    </location>
</feature>
<feature type="helix" evidence="10">
    <location>
        <begin position="345"/>
        <end position="377"/>
    </location>
</feature>
<feature type="helix" evidence="10">
    <location>
        <begin position="382"/>
        <end position="384"/>
    </location>
</feature>
<feature type="helix" evidence="10">
    <location>
        <begin position="387"/>
        <end position="389"/>
    </location>
</feature>
<feature type="strand" evidence="10">
    <location>
        <begin position="390"/>
        <end position="392"/>
    </location>
</feature>
<organism>
    <name type="scientific">Mycolicibacterium smegmatis</name>
    <name type="common">Mycobacterium smegmatis</name>
    <dbReference type="NCBI Taxonomy" id="1772"/>
    <lineage>
        <taxon>Bacteria</taxon>
        <taxon>Bacillati</taxon>
        <taxon>Actinomycetota</taxon>
        <taxon>Actinomycetes</taxon>
        <taxon>Mycobacteriales</taxon>
        <taxon>Mycobacteriaceae</taxon>
        <taxon>Mycolicibacterium</taxon>
    </lineage>
</organism>
<dbReference type="EC" id="1.13.12.4" evidence="3"/>
<dbReference type="EMBL" id="J05402">
    <property type="protein sequence ID" value="AAA60429.1"/>
    <property type="molecule type" value="Genomic_DNA"/>
</dbReference>
<dbReference type="PIR" id="A35745">
    <property type="entry name" value="A35745"/>
</dbReference>
<dbReference type="RefSeq" id="WP_003895417.1">
    <property type="nucleotide sequence ID" value="NZ_UGQO01000002.1"/>
</dbReference>
<dbReference type="PDB" id="6DVH">
    <property type="method" value="X-ray"/>
    <property type="resolution" value="1.70 A"/>
    <property type="chains" value="A/B/C/D/E/F=1-394"/>
</dbReference>
<dbReference type="PDB" id="6DVI">
    <property type="method" value="X-ray"/>
    <property type="resolution" value="2.30 A"/>
    <property type="chains" value="A/B/C/D/E/F=1-394"/>
</dbReference>
<dbReference type="PDBsum" id="6DVH"/>
<dbReference type="PDBsum" id="6DVI"/>
<dbReference type="SMR" id="P21795"/>
<dbReference type="GeneID" id="93458699"/>
<dbReference type="KEGG" id="msh:LI98_19700"/>
<dbReference type="KEGG" id="msn:LI99_19695"/>
<dbReference type="OMA" id="WADFQYE"/>
<dbReference type="GO" id="GO:0010181">
    <property type="term" value="F:FMN binding"/>
    <property type="evidence" value="ECO:0007669"/>
    <property type="project" value="InterPro"/>
</dbReference>
<dbReference type="GO" id="GO:0050040">
    <property type="term" value="F:lactate 2-monooxygenase activity"/>
    <property type="evidence" value="ECO:0007669"/>
    <property type="project" value="UniProtKB-EC"/>
</dbReference>
<dbReference type="CDD" id="cd03332">
    <property type="entry name" value="LMO_FMN"/>
    <property type="match status" value="1"/>
</dbReference>
<dbReference type="Gene3D" id="3.20.20.70">
    <property type="entry name" value="Aldolase class I"/>
    <property type="match status" value="1"/>
</dbReference>
<dbReference type="InterPro" id="IPR013785">
    <property type="entry name" value="Aldolase_TIM"/>
</dbReference>
<dbReference type="InterPro" id="IPR012133">
    <property type="entry name" value="Alpha-hydoxy_acid_DH_FMN"/>
</dbReference>
<dbReference type="InterPro" id="IPR000262">
    <property type="entry name" value="FMN-dep_DH"/>
</dbReference>
<dbReference type="InterPro" id="IPR037396">
    <property type="entry name" value="FMN_HAD"/>
</dbReference>
<dbReference type="InterPro" id="IPR008259">
    <property type="entry name" value="FMN_hydac_DH_AS"/>
</dbReference>
<dbReference type="InterPro" id="IPR037350">
    <property type="entry name" value="LMO_FMN"/>
</dbReference>
<dbReference type="PANTHER" id="PTHR10578:SF143">
    <property type="entry name" value="FMN-DEPENDENT ALPHA-HYDROXY ACID DEHYDROGENASE PB1A11.03"/>
    <property type="match status" value="1"/>
</dbReference>
<dbReference type="PANTHER" id="PTHR10578">
    <property type="entry name" value="S -2-HYDROXY-ACID OXIDASE-RELATED"/>
    <property type="match status" value="1"/>
</dbReference>
<dbReference type="Pfam" id="PF01070">
    <property type="entry name" value="FMN_dh"/>
    <property type="match status" value="1"/>
</dbReference>
<dbReference type="PIRSF" id="PIRSF000138">
    <property type="entry name" value="Al-hdrx_acd_dh"/>
    <property type="match status" value="1"/>
</dbReference>
<dbReference type="SUPFAM" id="SSF51395">
    <property type="entry name" value="FMN-linked oxidoreductases"/>
    <property type="match status" value="1"/>
</dbReference>
<dbReference type="PROSITE" id="PS00557">
    <property type="entry name" value="FMN_HYDROXY_ACID_DH_1"/>
    <property type="match status" value="1"/>
</dbReference>
<dbReference type="PROSITE" id="PS51349">
    <property type="entry name" value="FMN_HYDROXY_ACID_DH_2"/>
    <property type="match status" value="1"/>
</dbReference>
<keyword id="KW-0002">3D-structure</keyword>
<keyword id="KW-0903">Direct protein sequencing</keyword>
<keyword id="KW-0285">Flavoprotein</keyword>
<keyword id="KW-0288">FMN</keyword>
<keyword id="KW-0503">Monooxygenase</keyword>
<keyword id="KW-0560">Oxidoreductase</keyword>
<comment type="function">
    <text evidence="3">Catalyzes the oxidative decarboxylation of (S)-lactate (L-lactate) to acetate and carbon dioxide. Its physiological role remains unknown.</text>
</comment>
<comment type="catalytic activity">
    <reaction evidence="3">
        <text>(S)-lactate + O2 = acetate + CO2 + H2O</text>
        <dbReference type="Rhea" id="RHEA:16513"/>
        <dbReference type="ChEBI" id="CHEBI:15377"/>
        <dbReference type="ChEBI" id="CHEBI:15379"/>
        <dbReference type="ChEBI" id="CHEBI:16526"/>
        <dbReference type="ChEBI" id="CHEBI:16651"/>
        <dbReference type="ChEBI" id="CHEBI:30089"/>
        <dbReference type="EC" id="1.13.12.4"/>
    </reaction>
</comment>
<comment type="cofactor">
    <cofactor evidence="2">
        <name>FMN</name>
        <dbReference type="ChEBI" id="CHEBI:58210"/>
    </cofactor>
    <text evidence="2">Binds 1 FMN per subunit.</text>
</comment>
<comment type="biophysicochemical properties">
    <kinetics>
        <text evidence="3">kcat is 6250 min(-1).</text>
    </kinetics>
</comment>
<comment type="subunit">
    <text evidence="7">Homotetramer.</text>
</comment>
<comment type="miscellaneous">
    <text evidence="7">This enzyme proceeds along a 'coupled pathway', wherein rather than releasing the alpha-keto-acid as a product (in this case pyruvate), it remains in the active site, and after reaction with hydrogen peroxide undergoes an oxidative decarboxylation to produce acetate, carbon dioxide, and water.</text>
</comment>
<comment type="similarity">
    <text evidence="6">Belongs to the FMN-dependent alpha-hydroxy acid dehydrogenase family.</text>
</comment>
<comment type="caution">
    <text evidence="7">This enzyme was originally referred to as 'lactate oxidase' but this acetate producing enzyme is now referred to as 'lactate monooxygenase' (LMO), and 'lactate oxidase' (LOX) refers to a related flavoenzyme that converts lactate and molecular oxygen to pyruvate and hydrogen peroxide.</text>
</comment>
<proteinExistence type="evidence at protein level"/>